<reference key="1">
    <citation type="submission" date="2008-06" db="EMBL/GenBank/DDBJ databases">
        <title>Lactobacillus casei BL23 complete genome sequence.</title>
        <authorList>
            <person name="Maze A."/>
            <person name="Boel G."/>
            <person name="Bourand A."/>
            <person name="Loux V."/>
            <person name="Gibrat J.F."/>
            <person name="Zuniga M."/>
            <person name="Hartke A."/>
            <person name="Deutscher J."/>
        </authorList>
    </citation>
    <scope>NUCLEOTIDE SEQUENCE [LARGE SCALE GENOMIC DNA]</scope>
    <source>
        <strain>BL23</strain>
    </source>
</reference>
<accession>B3WED0</accession>
<sequence>MITLDWEKANGLITTVVQDATTKQVLMVAYMNQESLAKTMATGETWFWSRSRKTLWHKGATSGNIQTVKTIAVDCDADTLLVTVDPAGPACHTGHISCFYRHYPEGKDLT</sequence>
<organism>
    <name type="scientific">Lacticaseibacillus casei (strain BL23)</name>
    <name type="common">Lactobacillus casei</name>
    <dbReference type="NCBI Taxonomy" id="543734"/>
    <lineage>
        <taxon>Bacteria</taxon>
        <taxon>Bacillati</taxon>
        <taxon>Bacillota</taxon>
        <taxon>Bacilli</taxon>
        <taxon>Lactobacillales</taxon>
        <taxon>Lactobacillaceae</taxon>
        <taxon>Lacticaseibacillus</taxon>
    </lineage>
</organism>
<dbReference type="EC" id="3.5.4.19" evidence="1"/>
<dbReference type="EMBL" id="FM177140">
    <property type="protein sequence ID" value="CAQ66731.1"/>
    <property type="molecule type" value="Genomic_DNA"/>
</dbReference>
<dbReference type="SMR" id="B3WED0"/>
<dbReference type="KEGG" id="lcb:LCABL_16500"/>
<dbReference type="HOGENOM" id="CLU_048577_5_3_9"/>
<dbReference type="UniPathway" id="UPA00031">
    <property type="reaction ID" value="UER00008"/>
</dbReference>
<dbReference type="GO" id="GO:0005737">
    <property type="term" value="C:cytoplasm"/>
    <property type="evidence" value="ECO:0007669"/>
    <property type="project" value="UniProtKB-SubCell"/>
</dbReference>
<dbReference type="GO" id="GO:0000287">
    <property type="term" value="F:magnesium ion binding"/>
    <property type="evidence" value="ECO:0007669"/>
    <property type="project" value="UniProtKB-UniRule"/>
</dbReference>
<dbReference type="GO" id="GO:0004635">
    <property type="term" value="F:phosphoribosyl-AMP cyclohydrolase activity"/>
    <property type="evidence" value="ECO:0007669"/>
    <property type="project" value="UniProtKB-UniRule"/>
</dbReference>
<dbReference type="GO" id="GO:0008270">
    <property type="term" value="F:zinc ion binding"/>
    <property type="evidence" value="ECO:0007669"/>
    <property type="project" value="UniProtKB-UniRule"/>
</dbReference>
<dbReference type="GO" id="GO:0000105">
    <property type="term" value="P:L-histidine biosynthetic process"/>
    <property type="evidence" value="ECO:0007669"/>
    <property type="project" value="UniProtKB-UniRule"/>
</dbReference>
<dbReference type="FunFam" id="3.10.20.810:FF:000001">
    <property type="entry name" value="Histidine biosynthesis bifunctional protein HisIE"/>
    <property type="match status" value="1"/>
</dbReference>
<dbReference type="Gene3D" id="3.10.20.810">
    <property type="entry name" value="Phosphoribosyl-AMP cyclohydrolase"/>
    <property type="match status" value="1"/>
</dbReference>
<dbReference type="HAMAP" id="MF_01021">
    <property type="entry name" value="HisI"/>
    <property type="match status" value="1"/>
</dbReference>
<dbReference type="InterPro" id="IPR026660">
    <property type="entry name" value="PRA-CH"/>
</dbReference>
<dbReference type="InterPro" id="IPR002496">
    <property type="entry name" value="PRib_AMP_CycHydrolase_dom"/>
</dbReference>
<dbReference type="InterPro" id="IPR038019">
    <property type="entry name" value="PRib_AMP_CycHydrolase_sf"/>
</dbReference>
<dbReference type="NCBIfam" id="NF000768">
    <property type="entry name" value="PRK00051.1"/>
    <property type="match status" value="1"/>
</dbReference>
<dbReference type="PANTHER" id="PTHR42945">
    <property type="entry name" value="HISTIDINE BIOSYNTHESIS BIFUNCTIONAL PROTEIN"/>
    <property type="match status" value="1"/>
</dbReference>
<dbReference type="PANTHER" id="PTHR42945:SF1">
    <property type="entry name" value="HISTIDINE BIOSYNTHESIS BIFUNCTIONAL PROTEIN HIS7"/>
    <property type="match status" value="1"/>
</dbReference>
<dbReference type="Pfam" id="PF01502">
    <property type="entry name" value="PRA-CH"/>
    <property type="match status" value="1"/>
</dbReference>
<dbReference type="SUPFAM" id="SSF141734">
    <property type="entry name" value="HisI-like"/>
    <property type="match status" value="1"/>
</dbReference>
<feature type="chain" id="PRO_1000135352" description="Phosphoribosyl-AMP cyclohydrolase">
    <location>
        <begin position="1"/>
        <end position="110"/>
    </location>
</feature>
<feature type="binding site" evidence="1">
    <location>
        <position position="74"/>
    </location>
    <ligand>
        <name>Mg(2+)</name>
        <dbReference type="ChEBI" id="CHEBI:18420"/>
    </ligand>
</feature>
<feature type="binding site" evidence="1">
    <location>
        <position position="75"/>
    </location>
    <ligand>
        <name>Zn(2+)</name>
        <dbReference type="ChEBI" id="CHEBI:29105"/>
        <note>ligand shared between dimeric partners</note>
    </ligand>
</feature>
<feature type="binding site" evidence="1">
    <location>
        <position position="76"/>
    </location>
    <ligand>
        <name>Mg(2+)</name>
        <dbReference type="ChEBI" id="CHEBI:18420"/>
    </ligand>
</feature>
<feature type="binding site" evidence="1">
    <location>
        <position position="78"/>
    </location>
    <ligand>
        <name>Mg(2+)</name>
        <dbReference type="ChEBI" id="CHEBI:18420"/>
    </ligand>
</feature>
<feature type="binding site" evidence="1">
    <location>
        <position position="91"/>
    </location>
    <ligand>
        <name>Zn(2+)</name>
        <dbReference type="ChEBI" id="CHEBI:29105"/>
        <note>ligand shared between dimeric partners</note>
    </ligand>
</feature>
<feature type="binding site" evidence="1">
    <location>
        <position position="98"/>
    </location>
    <ligand>
        <name>Zn(2+)</name>
        <dbReference type="ChEBI" id="CHEBI:29105"/>
        <note>ligand shared between dimeric partners</note>
    </ligand>
</feature>
<proteinExistence type="inferred from homology"/>
<gene>
    <name evidence="1" type="primary">hisI</name>
    <name type="ordered locus">LCABL_16500</name>
</gene>
<name>HIS3_LACCB</name>
<keyword id="KW-0028">Amino-acid biosynthesis</keyword>
<keyword id="KW-0963">Cytoplasm</keyword>
<keyword id="KW-0368">Histidine biosynthesis</keyword>
<keyword id="KW-0378">Hydrolase</keyword>
<keyword id="KW-0460">Magnesium</keyword>
<keyword id="KW-0479">Metal-binding</keyword>
<keyword id="KW-0862">Zinc</keyword>
<evidence type="ECO:0000255" key="1">
    <source>
        <dbReference type="HAMAP-Rule" id="MF_01021"/>
    </source>
</evidence>
<protein>
    <recommendedName>
        <fullName evidence="1">Phosphoribosyl-AMP cyclohydrolase</fullName>
        <shortName evidence="1">PRA-CH</shortName>
        <ecNumber evidence="1">3.5.4.19</ecNumber>
    </recommendedName>
</protein>
<comment type="function">
    <text evidence="1">Catalyzes the hydrolysis of the adenine ring of phosphoribosyl-AMP.</text>
</comment>
<comment type="catalytic activity">
    <reaction evidence="1">
        <text>1-(5-phospho-beta-D-ribosyl)-5'-AMP + H2O = 1-(5-phospho-beta-D-ribosyl)-5-[(5-phospho-beta-D-ribosylamino)methylideneamino]imidazole-4-carboxamide</text>
        <dbReference type="Rhea" id="RHEA:20049"/>
        <dbReference type="ChEBI" id="CHEBI:15377"/>
        <dbReference type="ChEBI" id="CHEBI:58435"/>
        <dbReference type="ChEBI" id="CHEBI:59457"/>
        <dbReference type="EC" id="3.5.4.19"/>
    </reaction>
</comment>
<comment type="cofactor">
    <cofactor evidence="1">
        <name>Mg(2+)</name>
        <dbReference type="ChEBI" id="CHEBI:18420"/>
    </cofactor>
    <text evidence="1">Binds 1 Mg(2+) ion per subunit.</text>
</comment>
<comment type="cofactor">
    <cofactor evidence="1">
        <name>Zn(2+)</name>
        <dbReference type="ChEBI" id="CHEBI:29105"/>
    </cofactor>
    <text evidence="1">Binds 1 zinc ion per subunit.</text>
</comment>
<comment type="pathway">
    <text evidence="1">Amino-acid biosynthesis; L-histidine biosynthesis; L-histidine from 5-phospho-alpha-D-ribose 1-diphosphate: step 3/9.</text>
</comment>
<comment type="subunit">
    <text evidence="1">Homodimer.</text>
</comment>
<comment type="subcellular location">
    <subcellularLocation>
        <location evidence="1">Cytoplasm</location>
    </subcellularLocation>
</comment>
<comment type="similarity">
    <text evidence="1">Belongs to the PRA-CH family.</text>
</comment>